<name>CTU1_CANGA</name>
<comment type="function">
    <text evidence="1">Plays a central role in 2-thiolation of mcm(5)S(2)U at tRNA wobble positions of tRNA(Lys), tRNA(Glu) and tRNA(Gln). Directly binds tRNAs and probably acts by catalyzing adenylation of tRNAs, an intermediate required for 2-thiolation. It is unclear whether it acts as a sulfurtransferase that transfers sulfur from thiocarboxylated URM1 onto the uridine of tRNAs at wobble position. Prior mcm(5) tRNA modification by the elongator complex is required for 2-thiolation. May also be involved in protein urmylation.</text>
</comment>
<comment type="pathway">
    <text evidence="1">tRNA modification; 5-methoxycarbonylmethyl-2-thiouridine-tRNA biosynthesis.</text>
</comment>
<comment type="subcellular location">
    <subcellularLocation>
        <location evidence="1">Cytoplasm</location>
    </subcellularLocation>
</comment>
<comment type="similarity">
    <text evidence="1">Belongs to the TtcA family. CTU1/NCS6/ATPBD3 subfamily.</text>
</comment>
<reference key="1">
    <citation type="journal article" date="2004" name="Nature">
        <title>Genome evolution in yeasts.</title>
        <authorList>
            <person name="Dujon B."/>
            <person name="Sherman D."/>
            <person name="Fischer G."/>
            <person name="Durrens P."/>
            <person name="Casaregola S."/>
            <person name="Lafontaine I."/>
            <person name="de Montigny J."/>
            <person name="Marck C."/>
            <person name="Neuveglise C."/>
            <person name="Talla E."/>
            <person name="Goffard N."/>
            <person name="Frangeul L."/>
            <person name="Aigle M."/>
            <person name="Anthouard V."/>
            <person name="Babour A."/>
            <person name="Barbe V."/>
            <person name="Barnay S."/>
            <person name="Blanchin S."/>
            <person name="Beckerich J.-M."/>
            <person name="Beyne E."/>
            <person name="Bleykasten C."/>
            <person name="Boisrame A."/>
            <person name="Boyer J."/>
            <person name="Cattolico L."/>
            <person name="Confanioleri F."/>
            <person name="de Daruvar A."/>
            <person name="Despons L."/>
            <person name="Fabre E."/>
            <person name="Fairhead C."/>
            <person name="Ferry-Dumazet H."/>
            <person name="Groppi A."/>
            <person name="Hantraye F."/>
            <person name="Hennequin C."/>
            <person name="Jauniaux N."/>
            <person name="Joyet P."/>
            <person name="Kachouri R."/>
            <person name="Kerrest A."/>
            <person name="Koszul R."/>
            <person name="Lemaire M."/>
            <person name="Lesur I."/>
            <person name="Ma L."/>
            <person name="Muller H."/>
            <person name="Nicaud J.-M."/>
            <person name="Nikolski M."/>
            <person name="Oztas S."/>
            <person name="Ozier-Kalogeropoulos O."/>
            <person name="Pellenz S."/>
            <person name="Potier S."/>
            <person name="Richard G.-F."/>
            <person name="Straub M.-L."/>
            <person name="Suleau A."/>
            <person name="Swennen D."/>
            <person name="Tekaia F."/>
            <person name="Wesolowski-Louvel M."/>
            <person name="Westhof E."/>
            <person name="Wirth B."/>
            <person name="Zeniou-Meyer M."/>
            <person name="Zivanovic Y."/>
            <person name="Bolotin-Fukuhara M."/>
            <person name="Thierry A."/>
            <person name="Bouchier C."/>
            <person name="Caudron B."/>
            <person name="Scarpelli C."/>
            <person name="Gaillardin C."/>
            <person name="Weissenbach J."/>
            <person name="Wincker P."/>
            <person name="Souciet J.-L."/>
        </authorList>
    </citation>
    <scope>NUCLEOTIDE SEQUENCE [LARGE SCALE GENOMIC DNA]</scope>
    <source>
        <strain>ATCC 2001 / BCRC 20586 / JCM 3761 / NBRC 0622 / NRRL Y-65 / CBS 138</strain>
    </source>
</reference>
<dbReference type="EC" id="2.7.7.-" evidence="1"/>
<dbReference type="EMBL" id="CR380957">
    <property type="protein sequence ID" value="CAG61592.1"/>
    <property type="molecule type" value="Genomic_DNA"/>
</dbReference>
<dbReference type="RefSeq" id="XP_448629.1">
    <property type="nucleotide sequence ID" value="XM_448629.1"/>
</dbReference>
<dbReference type="SMR" id="Q6FMB5"/>
<dbReference type="FunCoup" id="Q6FMB5">
    <property type="interactions" value="477"/>
</dbReference>
<dbReference type="STRING" id="284593.Q6FMB5"/>
<dbReference type="EnsemblFungi" id="CAGL0K09416g-T">
    <property type="protein sequence ID" value="CAGL0K09416g-T-p1"/>
    <property type="gene ID" value="CAGL0K09416g"/>
</dbReference>
<dbReference type="KEGG" id="cgr:2890261"/>
<dbReference type="CGD" id="CAL0134641">
    <property type="gene designation" value="CAGL0K09416g"/>
</dbReference>
<dbReference type="VEuPathDB" id="FungiDB:B1J91_K09416g"/>
<dbReference type="VEuPathDB" id="FungiDB:CAGL0K09416g"/>
<dbReference type="eggNOG" id="KOG2840">
    <property type="taxonomic scope" value="Eukaryota"/>
</dbReference>
<dbReference type="HOGENOM" id="CLU_026481_1_2_1"/>
<dbReference type="InParanoid" id="Q6FMB5"/>
<dbReference type="OMA" id="MGKCERC"/>
<dbReference type="UniPathway" id="UPA00988"/>
<dbReference type="Proteomes" id="UP000002428">
    <property type="component" value="Chromosome K"/>
</dbReference>
<dbReference type="GO" id="GO:0005829">
    <property type="term" value="C:cytosol"/>
    <property type="evidence" value="ECO:0000250"/>
    <property type="project" value="UniProtKB"/>
</dbReference>
<dbReference type="GO" id="GO:0002144">
    <property type="term" value="C:cytosolic tRNA wobble base thiouridylase complex"/>
    <property type="evidence" value="ECO:0007669"/>
    <property type="project" value="EnsemblFungi"/>
</dbReference>
<dbReference type="GO" id="GO:0005739">
    <property type="term" value="C:mitochondrion"/>
    <property type="evidence" value="ECO:0007669"/>
    <property type="project" value="TreeGrafter"/>
</dbReference>
<dbReference type="GO" id="GO:0005777">
    <property type="term" value="C:peroxisome"/>
    <property type="evidence" value="ECO:0007669"/>
    <property type="project" value="EnsemblFungi"/>
</dbReference>
<dbReference type="GO" id="GO:0016779">
    <property type="term" value="F:nucleotidyltransferase activity"/>
    <property type="evidence" value="ECO:0007669"/>
    <property type="project" value="UniProtKB-UniRule"/>
</dbReference>
<dbReference type="GO" id="GO:0000049">
    <property type="term" value="F:tRNA binding"/>
    <property type="evidence" value="ECO:0000250"/>
    <property type="project" value="UniProtKB"/>
</dbReference>
<dbReference type="GO" id="GO:0103016">
    <property type="term" value="F:tRNA-uridine 2-sulfurtransferase activity"/>
    <property type="evidence" value="ECO:0007669"/>
    <property type="project" value="EnsemblFungi"/>
</dbReference>
<dbReference type="GO" id="GO:0032447">
    <property type="term" value="P:protein urmylation"/>
    <property type="evidence" value="ECO:0007669"/>
    <property type="project" value="UniProtKB-UniRule"/>
</dbReference>
<dbReference type="GO" id="GO:0034227">
    <property type="term" value="P:tRNA thio-modification"/>
    <property type="evidence" value="ECO:0000250"/>
    <property type="project" value="UniProtKB"/>
</dbReference>
<dbReference type="GO" id="GO:0002143">
    <property type="term" value="P:tRNA wobble position uridine thiolation"/>
    <property type="evidence" value="ECO:0007669"/>
    <property type="project" value="EnsemblFungi"/>
</dbReference>
<dbReference type="GO" id="GO:0002098">
    <property type="term" value="P:tRNA wobble uridine modification"/>
    <property type="evidence" value="ECO:0000250"/>
    <property type="project" value="UniProtKB"/>
</dbReference>
<dbReference type="CDD" id="cd01713">
    <property type="entry name" value="CTU1-like"/>
    <property type="match status" value="1"/>
</dbReference>
<dbReference type="FunFam" id="3.40.50.620:FF:000188">
    <property type="entry name" value="Cytoplasmic tRNA 2-thiolation protein 1"/>
    <property type="match status" value="1"/>
</dbReference>
<dbReference type="Gene3D" id="3.40.50.620">
    <property type="entry name" value="HUPs"/>
    <property type="match status" value="1"/>
</dbReference>
<dbReference type="HAMAP" id="MF_03053">
    <property type="entry name" value="CTU1"/>
    <property type="match status" value="1"/>
</dbReference>
<dbReference type="InterPro" id="IPR056369">
    <property type="entry name" value="CTU1-like_ATP-bd"/>
</dbReference>
<dbReference type="InterPro" id="IPR032442">
    <property type="entry name" value="CTU1_C"/>
</dbReference>
<dbReference type="InterPro" id="IPR000541">
    <property type="entry name" value="Ncs6/Tuc1/Ctu1"/>
</dbReference>
<dbReference type="InterPro" id="IPR014729">
    <property type="entry name" value="Rossmann-like_a/b/a_fold"/>
</dbReference>
<dbReference type="InterPro" id="IPR011063">
    <property type="entry name" value="TilS/TtcA_N"/>
</dbReference>
<dbReference type="InterPro" id="IPR035107">
    <property type="entry name" value="tRNA_thiolation_TtcA_Ctu1"/>
</dbReference>
<dbReference type="InterPro" id="IPR020554">
    <property type="entry name" value="UPF0021_CS"/>
</dbReference>
<dbReference type="NCBIfam" id="TIGR00269">
    <property type="entry name" value="TIGR00269 family protein"/>
    <property type="match status" value="1"/>
</dbReference>
<dbReference type="PANTHER" id="PTHR11807">
    <property type="entry name" value="ATPASES OF THE PP SUPERFAMILY-RELATED"/>
    <property type="match status" value="1"/>
</dbReference>
<dbReference type="PANTHER" id="PTHR11807:SF12">
    <property type="entry name" value="CYTOPLASMIC TRNA 2-THIOLATION PROTEIN 1"/>
    <property type="match status" value="1"/>
</dbReference>
<dbReference type="Pfam" id="PF01171">
    <property type="entry name" value="ATP_bind_3"/>
    <property type="match status" value="1"/>
</dbReference>
<dbReference type="Pfam" id="PF16503">
    <property type="entry name" value="zn-ribbon_14"/>
    <property type="match status" value="1"/>
</dbReference>
<dbReference type="PIRSF" id="PIRSF004976">
    <property type="entry name" value="ATPase_YdaO"/>
    <property type="match status" value="1"/>
</dbReference>
<dbReference type="SUPFAM" id="SSF52402">
    <property type="entry name" value="Adenine nucleotide alpha hydrolases-like"/>
    <property type="match status" value="1"/>
</dbReference>
<dbReference type="PROSITE" id="PS01263">
    <property type="entry name" value="UPF0021"/>
    <property type="match status" value="1"/>
</dbReference>
<gene>
    <name evidence="1" type="primary">NCS6</name>
    <name evidence="1" type="synonym">CTU1</name>
    <name type="ordered locus">CAGL0K09416g</name>
</gene>
<accession>Q6FMB5</accession>
<sequence length="358" mass="40578">MSYTAPTDPVNKQEVVKLSQLCELCHGRKAVLRRPKNLQKICKECFYYVFETEIHNTIVSNNLFQRGEKVAIGASGGKDSTVLAHILKLLNDRHDYGVKLVLLSIDEGIVGYRDDSLATVKRNQKQYQLPLEIVSFRDLYDWTMDEIVAIAGIRNSCTYCGVFRRQALDRGAAKLDINHVVTGHNADDMAETVLMNILRGDVARLERSTAIITQSAGSPIRRSKPFKYCYQKEIVLYAHYKKLDYFSTECTYAPEAFRGTARELMKNLEAVRPSCIIDIIQSGENLVLKKKKRHPNSKVEFKDGNRCERCGYLSSNKICKACMLLQGLEKNRASMSIDNDTNVDGAARVMRTLEKLSF</sequence>
<proteinExistence type="inferred from homology"/>
<keyword id="KW-0963">Cytoplasm</keyword>
<keyword id="KW-1185">Reference proteome</keyword>
<keyword id="KW-0694">RNA-binding</keyword>
<keyword id="KW-0808">Transferase</keyword>
<keyword id="KW-0819">tRNA processing</keyword>
<keyword id="KW-0820">tRNA-binding</keyword>
<protein>
    <recommendedName>
        <fullName evidence="1">Cytoplasmic tRNA 2-thiolation protein 1</fullName>
        <ecNumber evidence="1">2.7.7.-</ecNumber>
    </recommendedName>
    <alternativeName>
        <fullName evidence="1">Cytoplasmic tRNA adenylyltransferase 1</fullName>
    </alternativeName>
</protein>
<organism>
    <name type="scientific">Candida glabrata (strain ATCC 2001 / BCRC 20586 / JCM 3761 / NBRC 0622 / NRRL Y-65 / CBS 138)</name>
    <name type="common">Yeast</name>
    <name type="synonym">Nakaseomyces glabratus</name>
    <dbReference type="NCBI Taxonomy" id="284593"/>
    <lineage>
        <taxon>Eukaryota</taxon>
        <taxon>Fungi</taxon>
        <taxon>Dikarya</taxon>
        <taxon>Ascomycota</taxon>
        <taxon>Saccharomycotina</taxon>
        <taxon>Saccharomycetes</taxon>
        <taxon>Saccharomycetales</taxon>
        <taxon>Saccharomycetaceae</taxon>
        <taxon>Nakaseomyces</taxon>
    </lineage>
</organism>
<evidence type="ECO:0000255" key="1">
    <source>
        <dbReference type="HAMAP-Rule" id="MF_03053"/>
    </source>
</evidence>
<feature type="chain" id="PRO_0000368259" description="Cytoplasmic tRNA 2-thiolation protein 1">
    <location>
        <begin position="1"/>
        <end position="358"/>
    </location>
</feature>